<reference key="1">
    <citation type="journal article" date="2009" name="Proc. Natl. Acad. Sci. U.S.A.">
        <title>Biogeography of the Sulfolobus islandicus pan-genome.</title>
        <authorList>
            <person name="Reno M.L."/>
            <person name="Held N.L."/>
            <person name="Fields C.J."/>
            <person name="Burke P.V."/>
            <person name="Whitaker R.J."/>
        </authorList>
    </citation>
    <scope>NUCLEOTIDE SEQUENCE [LARGE SCALE GENOMIC DNA]</scope>
    <source>
        <strain>L.S.2.15 / Lassen #1</strain>
    </source>
</reference>
<accession>C3MRL0</accession>
<evidence type="ECO:0000255" key="1">
    <source>
        <dbReference type="HAMAP-Rule" id="MF_00508"/>
    </source>
</evidence>
<evidence type="ECO:0000305" key="2"/>
<gene>
    <name evidence="1" type="primary">rps10</name>
    <name type="ordered locus">LS215_2029</name>
</gene>
<dbReference type="EMBL" id="CP001399">
    <property type="protein sequence ID" value="ACP36023.1"/>
    <property type="molecule type" value="Genomic_DNA"/>
</dbReference>
<dbReference type="SMR" id="C3MRL0"/>
<dbReference type="KEGG" id="sis:LS215_2029"/>
<dbReference type="HOGENOM" id="CLU_122625_0_1_2"/>
<dbReference type="OrthoDB" id="371736at2157"/>
<dbReference type="Proteomes" id="UP000001747">
    <property type="component" value="Chromosome"/>
</dbReference>
<dbReference type="GO" id="GO:0015935">
    <property type="term" value="C:small ribosomal subunit"/>
    <property type="evidence" value="ECO:0007669"/>
    <property type="project" value="InterPro"/>
</dbReference>
<dbReference type="GO" id="GO:0003735">
    <property type="term" value="F:structural constituent of ribosome"/>
    <property type="evidence" value="ECO:0007669"/>
    <property type="project" value="InterPro"/>
</dbReference>
<dbReference type="GO" id="GO:0000049">
    <property type="term" value="F:tRNA binding"/>
    <property type="evidence" value="ECO:0007669"/>
    <property type="project" value="UniProtKB-UniRule"/>
</dbReference>
<dbReference type="GO" id="GO:0006412">
    <property type="term" value="P:translation"/>
    <property type="evidence" value="ECO:0007669"/>
    <property type="project" value="UniProtKB-UniRule"/>
</dbReference>
<dbReference type="FunFam" id="3.30.70.600:FF:000004">
    <property type="entry name" value="30S ribosomal protein S10"/>
    <property type="match status" value="1"/>
</dbReference>
<dbReference type="Gene3D" id="3.30.70.600">
    <property type="entry name" value="Ribosomal protein S10 domain"/>
    <property type="match status" value="1"/>
</dbReference>
<dbReference type="HAMAP" id="MF_00508">
    <property type="entry name" value="Ribosomal_uS10"/>
    <property type="match status" value="1"/>
</dbReference>
<dbReference type="InterPro" id="IPR001848">
    <property type="entry name" value="Ribosomal_uS10"/>
</dbReference>
<dbReference type="InterPro" id="IPR018268">
    <property type="entry name" value="Ribosomal_uS10_CS"/>
</dbReference>
<dbReference type="InterPro" id="IPR027486">
    <property type="entry name" value="Ribosomal_uS10_dom"/>
</dbReference>
<dbReference type="InterPro" id="IPR036838">
    <property type="entry name" value="Ribosomal_uS10_dom_sf"/>
</dbReference>
<dbReference type="InterPro" id="IPR005729">
    <property type="entry name" value="Ribosomal_uS10_euk/arc"/>
</dbReference>
<dbReference type="NCBIfam" id="TIGR01046">
    <property type="entry name" value="uS10_euk_arch"/>
    <property type="match status" value="1"/>
</dbReference>
<dbReference type="PANTHER" id="PTHR11700">
    <property type="entry name" value="30S RIBOSOMAL PROTEIN S10 FAMILY MEMBER"/>
    <property type="match status" value="1"/>
</dbReference>
<dbReference type="Pfam" id="PF00338">
    <property type="entry name" value="Ribosomal_S10"/>
    <property type="match status" value="1"/>
</dbReference>
<dbReference type="PRINTS" id="PR00971">
    <property type="entry name" value="RIBOSOMALS10"/>
</dbReference>
<dbReference type="SMART" id="SM01403">
    <property type="entry name" value="Ribosomal_S10"/>
    <property type="match status" value="1"/>
</dbReference>
<dbReference type="SUPFAM" id="SSF54999">
    <property type="entry name" value="Ribosomal protein S10"/>
    <property type="match status" value="1"/>
</dbReference>
<dbReference type="PROSITE" id="PS00361">
    <property type="entry name" value="RIBOSOMAL_S10"/>
    <property type="match status" value="1"/>
</dbReference>
<comment type="function">
    <text evidence="1">Involved in the binding of tRNA to the ribosomes.</text>
</comment>
<comment type="subunit">
    <text evidence="1">Part of the 30S ribosomal subunit.</text>
</comment>
<comment type="similarity">
    <text evidence="1">Belongs to the universal ribosomal protein uS10 family.</text>
</comment>
<feature type="chain" id="PRO_1000206600" description="Small ribosomal subunit protein uS10">
    <location>
        <begin position="1"/>
        <end position="102"/>
    </location>
</feature>
<organism>
    <name type="scientific">Saccharolobus islandicus (strain L.S.2.15 / Lassen #1)</name>
    <name type="common">Sulfolobus islandicus</name>
    <dbReference type="NCBI Taxonomy" id="429572"/>
    <lineage>
        <taxon>Archaea</taxon>
        <taxon>Thermoproteota</taxon>
        <taxon>Thermoprotei</taxon>
        <taxon>Sulfolobales</taxon>
        <taxon>Sulfolobaceae</taxon>
        <taxon>Saccharolobus</taxon>
    </lineage>
</organism>
<proteinExistence type="inferred from homology"/>
<name>RS10_SACI2</name>
<keyword id="KW-0687">Ribonucleoprotein</keyword>
<keyword id="KW-0689">Ribosomal protein</keyword>
<protein>
    <recommendedName>
        <fullName evidence="1">Small ribosomal subunit protein uS10</fullName>
    </recommendedName>
    <alternativeName>
        <fullName evidence="2">30S ribosomal protein S10</fullName>
    </alternativeName>
</protein>
<sequence length="102" mass="12112">MPTKARIRLWSTNVENLNYVITQIRGIVEKTGIEMRGPIPLPTSKLEVPIMRLPHGEGRKKWEKWEMRVHKRLIDIAADERVMRQLMRVRVPEDVYIEIQLI</sequence>